<proteinExistence type="evidence at protein level"/>
<gene>
    <name evidence="4" type="primary">nucC</name>
    <name type="ORF">A4W92_29540</name>
</gene>
<keyword id="KW-0002">3D-structure</keyword>
<keyword id="KW-0051">Antiviral defense</keyword>
<keyword id="KW-0255">Endonuclease</keyword>
<keyword id="KW-0378">Hydrolase</keyword>
<keyword id="KW-0460">Magnesium</keyword>
<keyword id="KW-0479">Metal-binding</keyword>
<keyword id="KW-0540">Nuclease</keyword>
<keyword id="KW-0547">Nucleotide-binding</keyword>
<dbReference type="EC" id="3.1.-.-" evidence="3"/>
<dbReference type="EMBL" id="CP015117">
    <property type="protein sequence ID" value="AMX91007.1"/>
    <property type="molecule type" value="Genomic_DNA"/>
</dbReference>
<dbReference type="RefSeq" id="WP_003050273.1">
    <property type="nucleotide sequence ID" value="NZ_WXZT01000006.1"/>
</dbReference>
<dbReference type="PDB" id="6Q1H">
    <property type="method" value="X-ray"/>
    <property type="resolution" value="1.45 A"/>
    <property type="chains" value="A/B/C/E/F/G=2-241"/>
</dbReference>
<dbReference type="PDBsum" id="6Q1H"/>
<dbReference type="SMR" id="P0DTF8"/>
<dbReference type="GeneID" id="94693639"/>
<dbReference type="OMA" id="ENAWIEW"/>
<dbReference type="GO" id="GO:0004519">
    <property type="term" value="F:endonuclease activity"/>
    <property type="evidence" value="ECO:0007669"/>
    <property type="project" value="UniProtKB-KW"/>
</dbReference>
<dbReference type="GO" id="GO:0046872">
    <property type="term" value="F:metal ion binding"/>
    <property type="evidence" value="ECO:0007669"/>
    <property type="project" value="UniProtKB-KW"/>
</dbReference>
<dbReference type="GO" id="GO:0000166">
    <property type="term" value="F:nucleotide binding"/>
    <property type="evidence" value="ECO:0007669"/>
    <property type="project" value="UniProtKB-KW"/>
</dbReference>
<dbReference type="GO" id="GO:0051607">
    <property type="term" value="P:defense response to virus"/>
    <property type="evidence" value="ECO:0007669"/>
    <property type="project" value="UniProtKB-KW"/>
</dbReference>
<dbReference type="CDD" id="cd21411">
    <property type="entry name" value="NucC"/>
    <property type="match status" value="1"/>
</dbReference>
<dbReference type="InterPro" id="IPR046537">
    <property type="entry name" value="DUF6602"/>
</dbReference>
<dbReference type="Pfam" id="PF20247">
    <property type="entry name" value="DUF6602"/>
    <property type="match status" value="1"/>
</dbReference>
<sequence length="241" mass="26663">MSQWSLSQLLSSLHEDIQQRLSVVRKTFGHPGTKGDASENVWIDMLDTYLPKRYQAAKAHVVDSLGNFSQQIDVVVFDRQYSPFIFTYENETIIPAESVYAVFEAKQTADAGLVAYAQEKVASVRRLHRTSLPIPHAGGTYPAKPLIPILGGLLTFESEWSPALGPSMDKALNANLTEGRLDIGCVAAHGHFFYDQASGAYSYTNENKPATAFLFKLIAQLQFSGTVPMIDVEAYGQWLTK</sequence>
<evidence type="ECO:0000250" key="1">
    <source>
        <dbReference type="UniProtKB" id="D7Y2H5"/>
    </source>
</evidence>
<evidence type="ECO:0000269" key="2">
    <source>
    </source>
</evidence>
<evidence type="ECO:0000269" key="3">
    <source>
    </source>
</evidence>
<evidence type="ECO:0000303" key="4">
    <source>
    </source>
</evidence>
<evidence type="ECO:0000303" key="5">
    <source>
    </source>
</evidence>
<evidence type="ECO:0000305" key="6">
    <source>
    </source>
</evidence>
<evidence type="ECO:0000305" key="7">
    <source>
    </source>
</evidence>
<evidence type="ECO:0007744" key="8">
    <source>
        <dbReference type="PDB" id="6Q1H"/>
    </source>
</evidence>
<evidence type="ECO:0007829" key="9">
    <source>
        <dbReference type="PDB" id="6Q1H"/>
    </source>
</evidence>
<organism>
    <name type="scientific">Pseudomonas aeruginosa</name>
    <dbReference type="NCBI Taxonomy" id="287"/>
    <lineage>
        <taxon>Bacteria</taxon>
        <taxon>Pseudomonadati</taxon>
        <taxon>Pseudomonadota</taxon>
        <taxon>Gammaproteobacteria</taxon>
        <taxon>Pseudomonadales</taxon>
        <taxon>Pseudomonadaceae</taxon>
        <taxon>Pseudomonas</taxon>
    </lineage>
</organism>
<protein>
    <recommendedName>
        <fullName evidence="4">Endodeoxyribonuclease NucC</fullName>
        <ecNumber evidence="3">3.1.-.-</ecNumber>
    </recommendedName>
    <alternativeName>
        <fullName>NucC nuclease</fullName>
    </alternativeName>
</protein>
<accession>P0DTF8</accession>
<comment type="function">
    <text evidence="2 3 5 7">Effector DNase of a CBASS antivirus system (Probable) (PubMed:31932164, PubMed:31932165). CBASS (cyclic oligonucleotide-based antiphage signaling system) provides immunity against bacteriophage. The CD-NTase protein synthesizes cyclic nucleotides in response to infection; these serve as specific second messenger signals. The signals activate a diverse range of effectors, leading to bacterial cell death and thus abortive phage infection. A type III-C(AAA) CBASS system (PubMed:32839535).</text>
</comment>
<comment type="function">
    <text evidence="1 2 7">A cyclic nucleotide-activated dsDNase. In the presence of 3',3',3'-cyclic AMP-AMP-AMP (cAAA) and to a lesser extent cyclic-di-AMP (c-di-AMP), endonucleolytically degrades dsDNA (Probable). Binds one cAAA in a pocket on one surface of the trimer; cAAA binding promotes hexamerization which is probably necessary for nuclease activation (PubMed:31932164). The nuclease digests dsDNA to about 50 bp lengths. DNA has been modeled to contact a pair of juxtaposed active sites (one from each layer of the hexamer), accounting for cleavage on both strands (By similarity).</text>
</comment>
<comment type="cofactor">
    <cofactor evidence="1">
        <name>Mg(2+)</name>
        <dbReference type="ChEBI" id="CHEBI:18420"/>
    </cofactor>
</comment>
<comment type="activity regulation">
    <text evidence="7">Activated by cAAA and to a lesser extent cAA; both cyclic nucleotides are products of its cognate CD-NTase. Cyclic nucleotide binding causes hexamerization.</text>
</comment>
<comment type="subunit">
    <text evidence="2 3">Self-oligomerizes (PubMed:31932165). Forms homotrimers; in the presence of cAAA the trimers associate face-to-face to form homohexamers. The 2 cAAA-binding sites are on the exterior of the hexamer at the three-way junction, there are maximally 2 cyclic nucleotides per hexamer (PubMed:31932164).</text>
</comment>
<comment type="domain">
    <text evidence="2">Second messenger binding causes a series of shifts that enclose the cAAA molecule.</text>
</comment>
<comment type="similarity">
    <text evidence="6">Belongs to the NucC endonuclease family.</text>
</comment>
<feature type="chain" id="PRO_0000451846" description="Endodeoxyribonuclease NucC">
    <location>
        <begin position="1"/>
        <end position="241"/>
    </location>
</feature>
<feature type="active site" evidence="6">
    <location>
        <position position="73"/>
    </location>
</feature>
<feature type="active site" evidence="6">
    <location>
        <position position="104"/>
    </location>
</feature>
<feature type="active site" evidence="6">
    <location>
        <position position="106"/>
    </location>
</feature>
<feature type="binding site" evidence="1">
    <location>
        <position position="73"/>
    </location>
    <ligand>
        <name>Mg(2+)</name>
        <dbReference type="ChEBI" id="CHEBI:18420"/>
    </ligand>
</feature>
<feature type="binding site" evidence="1">
    <location>
        <position position="104"/>
    </location>
    <ligand>
        <name>Mg(2+)</name>
        <dbReference type="ChEBI" id="CHEBI:18420"/>
    </ligand>
</feature>
<feature type="site" description="Binds cAAA" evidence="2 8">
    <location>
        <position position="53"/>
    </location>
</feature>
<feature type="site" description="Binds cAAA" evidence="2 8">
    <location>
        <position position="81"/>
    </location>
</feature>
<feature type="site" description="Gate loop latch" evidence="2 8">
    <location>
        <position position="136"/>
    </location>
</feature>
<feature type="site" description="Gate loop latch" evidence="2 8">
    <location>
        <position position="141"/>
    </location>
</feature>
<feature type="site" description="Binds cAAA" evidence="2 8">
    <location>
        <position position="226"/>
    </location>
</feature>
<feature type="helix" evidence="9">
    <location>
        <begin position="6"/>
        <end position="27"/>
    </location>
</feature>
<feature type="helix" evidence="9">
    <location>
        <begin position="31"/>
        <end position="49"/>
    </location>
</feature>
<feature type="strand" evidence="9">
    <location>
        <begin position="55"/>
        <end position="62"/>
    </location>
</feature>
<feature type="strand" evidence="9">
    <location>
        <begin position="72"/>
        <end position="77"/>
    </location>
</feature>
<feature type="strand" evidence="9">
    <location>
        <begin position="85"/>
        <end position="88"/>
    </location>
</feature>
<feature type="strand" evidence="9">
    <location>
        <begin position="91"/>
        <end position="95"/>
    </location>
</feature>
<feature type="helix" evidence="9">
    <location>
        <begin position="96"/>
        <end position="98"/>
    </location>
</feature>
<feature type="strand" evidence="9">
    <location>
        <begin position="99"/>
        <end position="105"/>
    </location>
</feature>
<feature type="strand" evidence="9">
    <location>
        <begin position="107"/>
        <end position="109"/>
    </location>
</feature>
<feature type="helix" evidence="9">
    <location>
        <begin position="111"/>
        <end position="125"/>
    </location>
</feature>
<feature type="strand" evidence="9">
    <location>
        <begin position="134"/>
        <end position="136"/>
    </location>
</feature>
<feature type="strand" evidence="9">
    <location>
        <begin position="139"/>
        <end position="141"/>
    </location>
</feature>
<feature type="strand" evidence="9">
    <location>
        <begin position="150"/>
        <end position="162"/>
    </location>
</feature>
<feature type="helix" evidence="9">
    <location>
        <begin position="166"/>
        <end position="173"/>
    </location>
</feature>
<feature type="strand" evidence="9">
    <location>
        <begin position="183"/>
        <end position="186"/>
    </location>
</feature>
<feature type="turn" evidence="9">
    <location>
        <begin position="187"/>
        <end position="189"/>
    </location>
</feature>
<feature type="strand" evidence="9">
    <location>
        <begin position="190"/>
        <end position="195"/>
    </location>
</feature>
<feature type="turn" evidence="9">
    <location>
        <begin position="196"/>
        <end position="199"/>
    </location>
</feature>
<feature type="strand" evidence="9">
    <location>
        <begin position="200"/>
        <end position="207"/>
    </location>
</feature>
<feature type="helix" evidence="9">
    <location>
        <begin position="209"/>
        <end position="222"/>
    </location>
</feature>
<feature type="helix" evidence="9">
    <location>
        <begin position="232"/>
        <end position="236"/>
    </location>
</feature>
<feature type="helix" evidence="9">
    <location>
        <begin position="237"/>
        <end position="239"/>
    </location>
</feature>
<reference key="1">
    <citation type="journal article" date="2016" name="Antimicrob. Agents Chemother.">
        <title>Dynamics of Mutations during Development of Resistance by Pseudomonas aeruginosa against Five Antibiotics.</title>
        <authorList>
            <person name="Feng Y."/>
            <person name="Jonker M.J."/>
            <person name="Moustakas I."/>
            <person name="Brul S."/>
            <person name="Ter Kuile B.H."/>
        </authorList>
    </citation>
    <scope>NUCLEOTIDE SEQUENCE [LARGE SCALE GENOMIC DNA]</scope>
    <source>
        <strain>ATCC 27853 / DSM 1117 / CIP 76.110 / JCM 6119 / LMG 6395 / NCIMB 12469</strain>
    </source>
</reference>
<reference key="2">
    <citation type="journal article" date="2020" name="Mol. Cell">
        <title>HORMA Domain Proteins and a Trip13-like ATPase Regulate Bacterial cGAS-like Enzymes to Mediate Bacteriophage Immunity.</title>
        <authorList>
            <person name="Ye Q."/>
            <person name="Lau R.K."/>
            <person name="Mathews I.T."/>
            <person name="Birkholz E.A."/>
            <person name="Watrous J.D."/>
            <person name="Azimi C.S."/>
            <person name="Pogliano J."/>
            <person name="Jain M."/>
            <person name="Corbett K.D."/>
        </authorList>
    </citation>
    <scope>FUNCTION</scope>
    <scope>ACTIVITY REGULATION</scope>
    <scope>SUBUNIT</scope>
    <source>
        <strain>ATCC 27853 / DSM 1117 / CIP 76.110 / JCM 6119 / LMG 6395 / NCIMB 12469</strain>
    </source>
</reference>
<reference key="3">
    <citation type="journal article" date="2020" name="Nat. Microbiol.">
        <title>Diversity and classification of cyclic-oligonucleotide-based anti-phage signalling systems.</title>
        <authorList>
            <person name="Millman A."/>
            <person name="Melamed S."/>
            <person name="Amitai G."/>
            <person name="Sorek R."/>
        </authorList>
    </citation>
    <scope>CLASSIFICATION AND NOMENCLATURE</scope>
</reference>
<reference evidence="8" key="4">
    <citation type="journal article" date="2020" name="Mol. Cell">
        <title>Structure and Mechanism of a Cyclic Trinucleotide-Activated Bacterial Endonuclease Mediating Bacteriophage Immunity.</title>
        <authorList>
            <person name="Lau R.K."/>
            <person name="Ye Q."/>
            <person name="Birkholz E.A."/>
            <person name="Berg K.R."/>
            <person name="Patel L."/>
            <person name="Mathews I.T."/>
            <person name="Watrous J.D."/>
            <person name="Ego K."/>
            <person name="Whiteley A.T."/>
            <person name="Lowey B."/>
            <person name="Mekalanos J.J."/>
            <person name="Kranzusch P.J."/>
            <person name="Jain M."/>
            <person name="Pogliano J."/>
            <person name="Corbett K.D."/>
        </authorList>
    </citation>
    <scope>X-RAY CRYSTALLOGRAPHY (1.45 ANGSTROMS) OF 2-241 IN COMPLEX WITH CYCLIC AMP-AMP-AMP</scope>
    <scope>FUNCTION</scope>
    <scope>ACTIVITY REGULATION</scope>
    <scope>SUBUNIT</scope>
    <source>
        <strain>ATCC 27853 / DSM 1117 / CIP 76.110 / JCM 6119 / LMG 6395 / NCIMB 12469</strain>
    </source>
</reference>
<name>NUCC_PSEAI</name>